<accession>O00264</accession>
<accession>B7Z1L3</accession>
<accession>Q9UGJ9</accession>
<sequence>MAAEDVVATGADPSDLESGGLLHEIFTSPLNLLLLGLCIFLLYKIVRGDQPAASGDSDDDEPPPLPRLKRRDFTPAELRRFDGVQDPRILMAINGKVFDVTKGRKFYGPEGPYGVFAGRDASRGLATFCLDKEALKDEYDDLSDLTAAQQETLSDWESQFTFKYHHVGKLLKEGEEPTVYSDEEEPKDESARKND</sequence>
<proteinExistence type="evidence at protein level"/>
<evidence type="ECO:0000250" key="1"/>
<evidence type="ECO:0000250" key="2">
    <source>
        <dbReference type="UniProtKB" id="O55022"/>
    </source>
</evidence>
<evidence type="ECO:0000250" key="3">
    <source>
        <dbReference type="UniProtKB" id="Q95250"/>
    </source>
</evidence>
<evidence type="ECO:0000255" key="4"/>
<evidence type="ECO:0000256" key="5">
    <source>
        <dbReference type="SAM" id="MobiDB-lite"/>
    </source>
</evidence>
<evidence type="ECO:0000269" key="6">
    <source>
    </source>
</evidence>
<evidence type="ECO:0000269" key="7">
    <source>
    </source>
</evidence>
<evidence type="ECO:0000269" key="8">
    <source>
    </source>
</evidence>
<evidence type="ECO:0000269" key="9">
    <source>
    </source>
</evidence>
<evidence type="ECO:0000269" key="10">
    <source>
    </source>
</evidence>
<evidence type="ECO:0000269" key="11">
    <source>
    </source>
</evidence>
<evidence type="ECO:0000269" key="12">
    <source>
    </source>
</evidence>
<evidence type="ECO:0000269" key="13">
    <source>
    </source>
</evidence>
<evidence type="ECO:0000269" key="14">
    <source>
    </source>
</evidence>
<evidence type="ECO:0000269" key="15">
    <source>
    </source>
</evidence>
<evidence type="ECO:0000269" key="16">
    <source>
    </source>
</evidence>
<evidence type="ECO:0000269" key="17">
    <source>
    </source>
</evidence>
<evidence type="ECO:0000269" key="18">
    <source>
    </source>
</evidence>
<evidence type="ECO:0000269" key="19">
    <source ref="7"/>
</evidence>
<evidence type="ECO:0000303" key="20">
    <source>
    </source>
</evidence>
<evidence type="ECO:0000303" key="21">
    <source>
    </source>
</evidence>
<evidence type="ECO:0000303" key="22">
    <source>
    </source>
</evidence>
<evidence type="ECO:0000303" key="23">
    <source>
    </source>
</evidence>
<evidence type="ECO:0000305" key="24"/>
<evidence type="ECO:0000312" key="25">
    <source>
        <dbReference type="HGNC" id="HGNC:16090"/>
    </source>
</evidence>
<evidence type="ECO:0007744" key="26">
    <source>
        <dbReference type="PDB" id="4X8Y"/>
    </source>
</evidence>
<evidence type="ECO:0007744" key="27">
    <source>
    </source>
</evidence>
<evidence type="ECO:0007744" key="28">
    <source>
    </source>
</evidence>
<evidence type="ECO:0007744" key="29">
    <source>
    </source>
</evidence>
<evidence type="ECO:0007744" key="30">
    <source>
    </source>
</evidence>
<evidence type="ECO:0007744" key="31">
    <source>
    </source>
</evidence>
<evidence type="ECO:0007744" key="32">
    <source>
    </source>
</evidence>
<evidence type="ECO:0007744" key="33">
    <source>
    </source>
</evidence>
<evidence type="ECO:0007744" key="34">
    <source>
    </source>
</evidence>
<evidence type="ECO:0007744" key="35">
    <source>
    </source>
</evidence>
<evidence type="ECO:0007744" key="36">
    <source>
    </source>
</evidence>
<evidence type="ECO:0007744" key="37">
    <source>
    </source>
</evidence>
<evidence type="ECO:0007829" key="38">
    <source>
        <dbReference type="PDB" id="4X8Y"/>
    </source>
</evidence>
<protein>
    <recommendedName>
        <fullName>Membrane-associated progesterone receptor component 1</fullName>
        <shortName>mPR</shortName>
    </recommendedName>
    <alternativeName>
        <fullName evidence="22">Dap1</fullName>
    </alternativeName>
    <alternativeName>
        <fullName evidence="22">IZA</fullName>
    </alternativeName>
</protein>
<name>PGRC1_HUMAN</name>
<organism>
    <name type="scientific">Homo sapiens</name>
    <name type="common">Human</name>
    <dbReference type="NCBI Taxonomy" id="9606"/>
    <lineage>
        <taxon>Eukaryota</taxon>
        <taxon>Metazoa</taxon>
        <taxon>Chordata</taxon>
        <taxon>Craniata</taxon>
        <taxon>Vertebrata</taxon>
        <taxon>Euteleostomi</taxon>
        <taxon>Mammalia</taxon>
        <taxon>Eutheria</taxon>
        <taxon>Euarchontoglires</taxon>
        <taxon>Primates</taxon>
        <taxon>Haplorrhini</taxon>
        <taxon>Catarrhini</taxon>
        <taxon>Hominidae</taxon>
        <taxon>Homo</taxon>
    </lineage>
</organism>
<dbReference type="EMBL" id="Y12711">
    <property type="protein sequence ID" value="CAA73248.1"/>
    <property type="molecule type" value="mRNA"/>
</dbReference>
<dbReference type="EMBL" id="AK293618">
    <property type="protein sequence ID" value="BAH11549.1"/>
    <property type="molecule type" value="mRNA"/>
</dbReference>
<dbReference type="EMBL" id="AC004835">
    <property type="status" value="NOT_ANNOTATED_CDS"/>
    <property type="molecule type" value="Genomic_DNA"/>
</dbReference>
<dbReference type="EMBL" id="CH471161">
    <property type="protein sequence ID" value="EAW89881.1"/>
    <property type="molecule type" value="Genomic_DNA"/>
</dbReference>
<dbReference type="EMBL" id="BC034238">
    <property type="protein sequence ID" value="AAH34238.1"/>
    <property type="molecule type" value="mRNA"/>
</dbReference>
<dbReference type="EMBL" id="AJ249131">
    <property type="protein sequence ID" value="CAB65109.1"/>
    <property type="molecule type" value="Genomic_DNA"/>
</dbReference>
<dbReference type="CCDS" id="CCDS14576.1">
    <molecule id="O00264-1"/>
</dbReference>
<dbReference type="CCDS" id="CCDS65313.1">
    <molecule id="O00264-2"/>
</dbReference>
<dbReference type="RefSeq" id="NP_001269550.1">
    <molecule id="O00264-2"/>
    <property type="nucleotide sequence ID" value="NM_001282621.2"/>
</dbReference>
<dbReference type="RefSeq" id="NP_006658.1">
    <molecule id="O00264-1"/>
    <property type="nucleotide sequence ID" value="NM_006667.5"/>
</dbReference>
<dbReference type="PDB" id="4X8Y">
    <property type="method" value="X-ray"/>
    <property type="resolution" value="1.95 A"/>
    <property type="chains" value="A/B=72-195"/>
</dbReference>
<dbReference type="PDBsum" id="4X8Y"/>
<dbReference type="SMR" id="O00264"/>
<dbReference type="BioGRID" id="116068">
    <property type="interactions" value="401"/>
</dbReference>
<dbReference type="CORUM" id="O00264"/>
<dbReference type="FunCoup" id="O00264">
    <property type="interactions" value="2282"/>
</dbReference>
<dbReference type="IntAct" id="O00264">
    <property type="interactions" value="203"/>
</dbReference>
<dbReference type="MINT" id="O00264"/>
<dbReference type="STRING" id="9606.ENSP00000217971"/>
<dbReference type="ChEMBL" id="CHEMBL4105706"/>
<dbReference type="DrugBank" id="DB00514">
    <property type="generic name" value="Dextromethorphan"/>
</dbReference>
<dbReference type="DrugBank" id="DB00540">
    <property type="generic name" value="Nortriptyline"/>
</dbReference>
<dbReference type="DrugBank" id="DB01104">
    <property type="generic name" value="Sertraline"/>
</dbReference>
<dbReference type="DrugCentral" id="O00264"/>
<dbReference type="TCDB" id="9.B.433.1.5">
    <property type="family name" value="the progesterone receptor membrane-associated component 2 (pgrmc2) family"/>
</dbReference>
<dbReference type="GlyGen" id="O00264">
    <property type="glycosylation" value="1 site, 1 O-linked glycan (1 site)"/>
</dbReference>
<dbReference type="iPTMnet" id="O00264"/>
<dbReference type="PhosphoSitePlus" id="O00264"/>
<dbReference type="SwissPalm" id="O00264"/>
<dbReference type="BioMuta" id="PGRMC1"/>
<dbReference type="OGP" id="O00264"/>
<dbReference type="jPOST" id="O00264"/>
<dbReference type="MassIVE" id="O00264"/>
<dbReference type="PaxDb" id="9606-ENSP00000217971"/>
<dbReference type="PeptideAtlas" id="O00264"/>
<dbReference type="ProteomicsDB" id="47815">
    <molecule id="O00264-1"/>
</dbReference>
<dbReference type="ProteomicsDB" id="6345"/>
<dbReference type="Pumba" id="O00264"/>
<dbReference type="TopDownProteomics" id="O00264-1">
    <molecule id="O00264-1"/>
</dbReference>
<dbReference type="Antibodypedia" id="497">
    <property type="antibodies" value="208 antibodies from 36 providers"/>
</dbReference>
<dbReference type="DNASU" id="10857"/>
<dbReference type="Ensembl" id="ENST00000217971.8">
    <molecule id="O00264-1"/>
    <property type="protein sequence ID" value="ENSP00000217971.7"/>
    <property type="gene ID" value="ENSG00000101856.10"/>
</dbReference>
<dbReference type="Ensembl" id="ENST00000535419.2">
    <molecule id="O00264-2"/>
    <property type="protein sequence ID" value="ENSP00000442821.1"/>
    <property type="gene ID" value="ENSG00000101856.10"/>
</dbReference>
<dbReference type="GeneID" id="10857"/>
<dbReference type="KEGG" id="hsa:10857"/>
<dbReference type="MANE-Select" id="ENST00000217971.8">
    <property type="protein sequence ID" value="ENSP00000217971.7"/>
    <property type="RefSeq nucleotide sequence ID" value="NM_006667.5"/>
    <property type="RefSeq protein sequence ID" value="NP_006658.1"/>
</dbReference>
<dbReference type="UCSC" id="uc011mts.4">
    <molecule id="O00264-1"/>
    <property type="organism name" value="human"/>
</dbReference>
<dbReference type="AGR" id="HGNC:16090"/>
<dbReference type="CTD" id="10857"/>
<dbReference type="DisGeNET" id="10857"/>
<dbReference type="GeneCards" id="PGRMC1"/>
<dbReference type="HGNC" id="HGNC:16090">
    <property type="gene designation" value="PGRMC1"/>
</dbReference>
<dbReference type="HPA" id="ENSG00000101856">
    <property type="expression patterns" value="Tissue enhanced (liver)"/>
</dbReference>
<dbReference type="MalaCards" id="PGRMC1"/>
<dbReference type="MIM" id="300435">
    <property type="type" value="gene"/>
</dbReference>
<dbReference type="neXtProt" id="NX_O00264"/>
<dbReference type="OpenTargets" id="ENSG00000101856"/>
<dbReference type="Orphanet" id="98994">
    <property type="disease" value="Total early-onset cataract"/>
</dbReference>
<dbReference type="PharmGKB" id="PA33248"/>
<dbReference type="VEuPathDB" id="HostDB:ENSG00000101856"/>
<dbReference type="eggNOG" id="KOG1110">
    <property type="taxonomic scope" value="Eukaryota"/>
</dbReference>
<dbReference type="GeneTree" id="ENSGT00940000160619"/>
<dbReference type="HOGENOM" id="CLU_042860_5_0_1"/>
<dbReference type="InParanoid" id="O00264"/>
<dbReference type="OMA" id="ANEWETQ"/>
<dbReference type="OrthoDB" id="547796at2759"/>
<dbReference type="PAN-GO" id="O00264">
    <property type="GO annotations" value="2 GO annotations based on evolutionary models"/>
</dbReference>
<dbReference type="PhylomeDB" id="O00264"/>
<dbReference type="TreeFam" id="TF314562"/>
<dbReference type="PathwayCommons" id="O00264"/>
<dbReference type="Reactome" id="R-HSA-6798695">
    <property type="pathway name" value="Neutrophil degranulation"/>
</dbReference>
<dbReference type="SignaLink" id="O00264"/>
<dbReference type="BioGRID-ORCS" id="10857">
    <property type="hits" value="17 hits in 781 CRISPR screens"/>
</dbReference>
<dbReference type="CD-CODE" id="91857CE7">
    <property type="entry name" value="Nucleolus"/>
</dbReference>
<dbReference type="ChiTaRS" id="PGRMC1">
    <property type="organism name" value="human"/>
</dbReference>
<dbReference type="GeneWiki" id="PGRMC1"/>
<dbReference type="GenomeRNAi" id="10857"/>
<dbReference type="Pharos" id="O00264">
    <property type="development level" value="Tchem"/>
</dbReference>
<dbReference type="PRO" id="PR:O00264"/>
<dbReference type="Proteomes" id="UP000005640">
    <property type="component" value="Chromosome X"/>
</dbReference>
<dbReference type="RNAct" id="O00264">
    <property type="molecule type" value="protein"/>
</dbReference>
<dbReference type="Bgee" id="ENSG00000101856">
    <property type="expression patterns" value="Expressed in seminal vesicle and 215 other cell types or tissues"/>
</dbReference>
<dbReference type="ExpressionAtlas" id="O00264">
    <property type="expression patterns" value="baseline and differential"/>
</dbReference>
<dbReference type="GO" id="GO:0044297">
    <property type="term" value="C:cell body"/>
    <property type="evidence" value="ECO:0000250"/>
    <property type="project" value="ARUK-UCL"/>
</dbReference>
<dbReference type="GO" id="GO:0012505">
    <property type="term" value="C:endomembrane system"/>
    <property type="evidence" value="ECO:0000318"/>
    <property type="project" value="GO_Central"/>
</dbReference>
<dbReference type="GO" id="GO:0005783">
    <property type="term" value="C:endoplasmic reticulum"/>
    <property type="evidence" value="ECO:0000318"/>
    <property type="project" value="GO_Central"/>
</dbReference>
<dbReference type="GO" id="GO:0005576">
    <property type="term" value="C:extracellular region"/>
    <property type="evidence" value="ECO:0007669"/>
    <property type="project" value="UniProtKB-SubCell"/>
</dbReference>
<dbReference type="GO" id="GO:0016020">
    <property type="term" value="C:membrane"/>
    <property type="evidence" value="ECO:0007005"/>
    <property type="project" value="UniProtKB"/>
</dbReference>
<dbReference type="GO" id="GO:0005741">
    <property type="term" value="C:mitochondrial outer membrane"/>
    <property type="evidence" value="ECO:0000250"/>
    <property type="project" value="UniProtKB"/>
</dbReference>
<dbReference type="GO" id="GO:0043005">
    <property type="term" value="C:neuron projection"/>
    <property type="evidence" value="ECO:0000250"/>
    <property type="project" value="ARUK-UCL"/>
</dbReference>
<dbReference type="GO" id="GO:0043025">
    <property type="term" value="C:neuronal cell body"/>
    <property type="evidence" value="ECO:0000250"/>
    <property type="project" value="ARUK-UCL"/>
</dbReference>
<dbReference type="GO" id="GO:0005886">
    <property type="term" value="C:plasma membrane"/>
    <property type="evidence" value="ECO:0000304"/>
    <property type="project" value="ARUK-UCL"/>
</dbReference>
<dbReference type="GO" id="GO:0030868">
    <property type="term" value="C:smooth endoplasmic reticulum membrane"/>
    <property type="evidence" value="ECO:0007669"/>
    <property type="project" value="UniProtKB-SubCell"/>
</dbReference>
<dbReference type="GO" id="GO:0035579">
    <property type="term" value="C:specific granule membrane"/>
    <property type="evidence" value="ECO:0000304"/>
    <property type="project" value="Reactome"/>
</dbReference>
<dbReference type="GO" id="GO:0045202">
    <property type="term" value="C:synapse"/>
    <property type="evidence" value="ECO:0000250"/>
    <property type="project" value="ARUK-UCL"/>
</dbReference>
<dbReference type="GO" id="GO:0001540">
    <property type="term" value="F:amyloid-beta binding"/>
    <property type="evidence" value="ECO:0000304"/>
    <property type="project" value="ARUK-UCL"/>
</dbReference>
<dbReference type="GO" id="GO:0020037">
    <property type="term" value="F:heme binding"/>
    <property type="evidence" value="ECO:0000314"/>
    <property type="project" value="UniProtKB"/>
</dbReference>
<dbReference type="GO" id="GO:0046872">
    <property type="term" value="F:metal ion binding"/>
    <property type="evidence" value="ECO:0007669"/>
    <property type="project" value="UniProtKB-KW"/>
</dbReference>
<dbReference type="GO" id="GO:0042803">
    <property type="term" value="F:protein homodimerization activity"/>
    <property type="evidence" value="ECO:0000314"/>
    <property type="project" value="UniProtKB"/>
</dbReference>
<dbReference type="GO" id="GO:0005496">
    <property type="term" value="F:steroid binding"/>
    <property type="evidence" value="ECO:0000304"/>
    <property type="project" value="ProtInc"/>
</dbReference>
<dbReference type="GO" id="GO:0008306">
    <property type="term" value="P:associative learning"/>
    <property type="evidence" value="ECO:0007669"/>
    <property type="project" value="Ensembl"/>
</dbReference>
<dbReference type="GO" id="GO:0007411">
    <property type="term" value="P:axon guidance"/>
    <property type="evidence" value="ECO:0007669"/>
    <property type="project" value="Ensembl"/>
</dbReference>
<dbReference type="GO" id="GO:0006783">
    <property type="term" value="P:heme biosynthetic process"/>
    <property type="evidence" value="ECO:0000314"/>
    <property type="project" value="UniProtKB"/>
</dbReference>
<dbReference type="GO" id="GO:0007613">
    <property type="term" value="P:memory"/>
    <property type="evidence" value="ECO:0007669"/>
    <property type="project" value="Ensembl"/>
</dbReference>
<dbReference type="GO" id="GO:0099563">
    <property type="term" value="P:modification of synaptic structure"/>
    <property type="evidence" value="ECO:0007669"/>
    <property type="project" value="Ensembl"/>
</dbReference>
<dbReference type="GO" id="GO:1905809">
    <property type="term" value="P:negative regulation of synapse organization"/>
    <property type="evidence" value="ECO:0007669"/>
    <property type="project" value="Ensembl"/>
</dbReference>
<dbReference type="GO" id="GO:0140077">
    <property type="term" value="P:positive regulation of lipoprotein transport"/>
    <property type="evidence" value="ECO:0000315"/>
    <property type="project" value="UniProtKB"/>
</dbReference>
<dbReference type="GO" id="GO:1903078">
    <property type="term" value="P:positive regulation of protein localization to plasma membrane"/>
    <property type="evidence" value="ECO:0000315"/>
    <property type="project" value="ARUK-UCL"/>
</dbReference>
<dbReference type="FunFam" id="3.10.120.10:FF:000003">
    <property type="entry name" value="membrane-associated progesterone receptor component 1"/>
    <property type="match status" value="1"/>
</dbReference>
<dbReference type="Gene3D" id="3.10.120.10">
    <property type="entry name" value="Cytochrome b5-like heme/steroid binding domain"/>
    <property type="match status" value="1"/>
</dbReference>
<dbReference type="InterPro" id="IPR001199">
    <property type="entry name" value="Cyt_B5-like_heme/steroid-bd"/>
</dbReference>
<dbReference type="InterPro" id="IPR036400">
    <property type="entry name" value="Cyt_B5-like_heme/steroid_sf"/>
</dbReference>
<dbReference type="InterPro" id="IPR050577">
    <property type="entry name" value="MAPR/NEUFC/NENF-like"/>
</dbReference>
<dbReference type="PANTHER" id="PTHR10281:SF23">
    <property type="entry name" value="MEMBRANE-ASSOCIATED PROGESTERONE RECEPTOR COMPONENT 1"/>
    <property type="match status" value="1"/>
</dbReference>
<dbReference type="PANTHER" id="PTHR10281">
    <property type="entry name" value="MEMBRANE-ASSOCIATED PROGESTERONE RECEPTOR COMPONENT-RELATED"/>
    <property type="match status" value="1"/>
</dbReference>
<dbReference type="Pfam" id="PF00173">
    <property type="entry name" value="Cyt-b5"/>
    <property type="match status" value="1"/>
</dbReference>
<dbReference type="SMART" id="SM01117">
    <property type="entry name" value="Cyt-b5"/>
    <property type="match status" value="1"/>
</dbReference>
<dbReference type="SUPFAM" id="SSF55856">
    <property type="entry name" value="Cytochrome b5-like heme/steroid binding domain"/>
    <property type="match status" value="1"/>
</dbReference>
<reference key="1">
    <citation type="journal article" date="1998" name="Biol. Chem.">
        <title>Cloning and tissue expression of two putative steroid membrane receptors.</title>
        <authorList>
            <person name="Gerdes D."/>
            <person name="Wehling M."/>
            <person name="Leube B."/>
            <person name="Falkenstein E."/>
        </authorList>
    </citation>
    <scope>NUCLEOTIDE SEQUENCE [MRNA] (ISOFORM 1)</scope>
    <source>
        <tissue>Liver</tissue>
    </source>
</reference>
<reference key="2">
    <citation type="journal article" date="2004" name="Nat. Genet.">
        <title>Complete sequencing and characterization of 21,243 full-length human cDNAs.</title>
        <authorList>
            <person name="Ota T."/>
            <person name="Suzuki Y."/>
            <person name="Nishikawa T."/>
            <person name="Otsuki T."/>
            <person name="Sugiyama T."/>
            <person name="Irie R."/>
            <person name="Wakamatsu A."/>
            <person name="Hayashi K."/>
            <person name="Sato H."/>
            <person name="Nagai K."/>
            <person name="Kimura K."/>
            <person name="Makita H."/>
            <person name="Sekine M."/>
            <person name="Obayashi M."/>
            <person name="Nishi T."/>
            <person name="Shibahara T."/>
            <person name="Tanaka T."/>
            <person name="Ishii S."/>
            <person name="Yamamoto J."/>
            <person name="Saito K."/>
            <person name="Kawai Y."/>
            <person name="Isono Y."/>
            <person name="Nakamura Y."/>
            <person name="Nagahari K."/>
            <person name="Murakami K."/>
            <person name="Yasuda T."/>
            <person name="Iwayanagi T."/>
            <person name="Wagatsuma M."/>
            <person name="Shiratori A."/>
            <person name="Sudo H."/>
            <person name="Hosoiri T."/>
            <person name="Kaku Y."/>
            <person name="Kodaira H."/>
            <person name="Kondo H."/>
            <person name="Sugawara M."/>
            <person name="Takahashi M."/>
            <person name="Kanda K."/>
            <person name="Yokoi T."/>
            <person name="Furuya T."/>
            <person name="Kikkawa E."/>
            <person name="Omura Y."/>
            <person name="Abe K."/>
            <person name="Kamihara K."/>
            <person name="Katsuta N."/>
            <person name="Sato K."/>
            <person name="Tanikawa M."/>
            <person name="Yamazaki M."/>
            <person name="Ninomiya K."/>
            <person name="Ishibashi T."/>
            <person name="Yamashita H."/>
            <person name="Murakawa K."/>
            <person name="Fujimori K."/>
            <person name="Tanai H."/>
            <person name="Kimata M."/>
            <person name="Watanabe M."/>
            <person name="Hiraoka S."/>
            <person name="Chiba Y."/>
            <person name="Ishida S."/>
            <person name="Ono Y."/>
            <person name="Takiguchi S."/>
            <person name="Watanabe S."/>
            <person name="Yosida M."/>
            <person name="Hotuta T."/>
            <person name="Kusano J."/>
            <person name="Kanehori K."/>
            <person name="Takahashi-Fujii A."/>
            <person name="Hara H."/>
            <person name="Tanase T.-O."/>
            <person name="Nomura Y."/>
            <person name="Togiya S."/>
            <person name="Komai F."/>
            <person name="Hara R."/>
            <person name="Takeuchi K."/>
            <person name="Arita M."/>
            <person name="Imose N."/>
            <person name="Musashino K."/>
            <person name="Yuuki H."/>
            <person name="Oshima A."/>
            <person name="Sasaki N."/>
            <person name="Aotsuka S."/>
            <person name="Yoshikawa Y."/>
            <person name="Matsunawa H."/>
            <person name="Ichihara T."/>
            <person name="Shiohata N."/>
            <person name="Sano S."/>
            <person name="Moriya S."/>
            <person name="Momiyama H."/>
            <person name="Satoh N."/>
            <person name="Takami S."/>
            <person name="Terashima Y."/>
            <person name="Suzuki O."/>
            <person name="Nakagawa S."/>
            <person name="Senoh A."/>
            <person name="Mizoguchi H."/>
            <person name="Goto Y."/>
            <person name="Shimizu F."/>
            <person name="Wakebe H."/>
            <person name="Hishigaki H."/>
            <person name="Watanabe T."/>
            <person name="Sugiyama A."/>
            <person name="Takemoto M."/>
            <person name="Kawakami B."/>
            <person name="Yamazaki M."/>
            <person name="Watanabe K."/>
            <person name="Kumagai A."/>
            <person name="Itakura S."/>
            <person name="Fukuzumi Y."/>
            <person name="Fujimori Y."/>
            <person name="Komiyama M."/>
            <person name="Tashiro H."/>
            <person name="Tanigami A."/>
            <person name="Fujiwara T."/>
            <person name="Ono T."/>
            <person name="Yamada K."/>
            <person name="Fujii Y."/>
            <person name="Ozaki K."/>
            <person name="Hirao M."/>
            <person name="Ohmori Y."/>
            <person name="Kawabata A."/>
            <person name="Hikiji T."/>
            <person name="Kobatake N."/>
            <person name="Inagaki H."/>
            <person name="Ikema Y."/>
            <person name="Okamoto S."/>
            <person name="Okitani R."/>
            <person name="Kawakami T."/>
            <person name="Noguchi S."/>
            <person name="Itoh T."/>
            <person name="Shigeta K."/>
            <person name="Senba T."/>
            <person name="Matsumura K."/>
            <person name="Nakajima Y."/>
            <person name="Mizuno T."/>
            <person name="Morinaga M."/>
            <person name="Sasaki M."/>
            <person name="Togashi T."/>
            <person name="Oyama M."/>
            <person name="Hata H."/>
            <person name="Watanabe M."/>
            <person name="Komatsu T."/>
            <person name="Mizushima-Sugano J."/>
            <person name="Satoh T."/>
            <person name="Shirai Y."/>
            <person name="Takahashi Y."/>
            <person name="Nakagawa K."/>
            <person name="Okumura K."/>
            <person name="Nagase T."/>
            <person name="Nomura N."/>
            <person name="Kikuchi H."/>
            <person name="Masuho Y."/>
            <person name="Yamashita R."/>
            <person name="Nakai K."/>
            <person name="Yada T."/>
            <person name="Nakamura Y."/>
            <person name="Ohara O."/>
            <person name="Isogai T."/>
            <person name="Sugano S."/>
        </authorList>
    </citation>
    <scope>NUCLEOTIDE SEQUENCE [LARGE SCALE MRNA] (ISOFORM 2)</scope>
    <source>
        <tissue>Cerebellum</tissue>
    </source>
</reference>
<reference key="3">
    <citation type="journal article" date="2005" name="Nature">
        <title>The DNA sequence of the human X chromosome.</title>
        <authorList>
            <person name="Ross M.T."/>
            <person name="Grafham D.V."/>
            <person name="Coffey A.J."/>
            <person name="Scherer S."/>
            <person name="McLay K."/>
            <person name="Muzny D."/>
            <person name="Platzer M."/>
            <person name="Howell G.R."/>
            <person name="Burrows C."/>
            <person name="Bird C.P."/>
            <person name="Frankish A."/>
            <person name="Lovell F.L."/>
            <person name="Howe K.L."/>
            <person name="Ashurst J.L."/>
            <person name="Fulton R.S."/>
            <person name="Sudbrak R."/>
            <person name="Wen G."/>
            <person name="Jones M.C."/>
            <person name="Hurles M.E."/>
            <person name="Andrews T.D."/>
            <person name="Scott C.E."/>
            <person name="Searle S."/>
            <person name="Ramser J."/>
            <person name="Whittaker A."/>
            <person name="Deadman R."/>
            <person name="Carter N.P."/>
            <person name="Hunt S.E."/>
            <person name="Chen R."/>
            <person name="Cree A."/>
            <person name="Gunaratne P."/>
            <person name="Havlak P."/>
            <person name="Hodgson A."/>
            <person name="Metzker M.L."/>
            <person name="Richards S."/>
            <person name="Scott G."/>
            <person name="Steffen D."/>
            <person name="Sodergren E."/>
            <person name="Wheeler D.A."/>
            <person name="Worley K.C."/>
            <person name="Ainscough R."/>
            <person name="Ambrose K.D."/>
            <person name="Ansari-Lari M.A."/>
            <person name="Aradhya S."/>
            <person name="Ashwell R.I."/>
            <person name="Babbage A.K."/>
            <person name="Bagguley C.L."/>
            <person name="Ballabio A."/>
            <person name="Banerjee R."/>
            <person name="Barker G.E."/>
            <person name="Barlow K.F."/>
            <person name="Barrett I.P."/>
            <person name="Bates K.N."/>
            <person name="Beare D.M."/>
            <person name="Beasley H."/>
            <person name="Beasley O."/>
            <person name="Beck A."/>
            <person name="Bethel G."/>
            <person name="Blechschmidt K."/>
            <person name="Brady N."/>
            <person name="Bray-Allen S."/>
            <person name="Bridgeman A.M."/>
            <person name="Brown A.J."/>
            <person name="Brown M.J."/>
            <person name="Bonnin D."/>
            <person name="Bruford E.A."/>
            <person name="Buhay C."/>
            <person name="Burch P."/>
            <person name="Burford D."/>
            <person name="Burgess J."/>
            <person name="Burrill W."/>
            <person name="Burton J."/>
            <person name="Bye J.M."/>
            <person name="Carder C."/>
            <person name="Carrel L."/>
            <person name="Chako J."/>
            <person name="Chapman J.C."/>
            <person name="Chavez D."/>
            <person name="Chen E."/>
            <person name="Chen G."/>
            <person name="Chen Y."/>
            <person name="Chen Z."/>
            <person name="Chinault C."/>
            <person name="Ciccodicola A."/>
            <person name="Clark S.Y."/>
            <person name="Clarke G."/>
            <person name="Clee C.M."/>
            <person name="Clegg S."/>
            <person name="Clerc-Blankenburg K."/>
            <person name="Clifford K."/>
            <person name="Cobley V."/>
            <person name="Cole C.G."/>
            <person name="Conquer J.S."/>
            <person name="Corby N."/>
            <person name="Connor R.E."/>
            <person name="David R."/>
            <person name="Davies J."/>
            <person name="Davis C."/>
            <person name="Davis J."/>
            <person name="Delgado O."/>
            <person name="Deshazo D."/>
            <person name="Dhami P."/>
            <person name="Ding Y."/>
            <person name="Dinh H."/>
            <person name="Dodsworth S."/>
            <person name="Draper H."/>
            <person name="Dugan-Rocha S."/>
            <person name="Dunham A."/>
            <person name="Dunn M."/>
            <person name="Durbin K.J."/>
            <person name="Dutta I."/>
            <person name="Eades T."/>
            <person name="Ellwood M."/>
            <person name="Emery-Cohen A."/>
            <person name="Errington H."/>
            <person name="Evans K.L."/>
            <person name="Faulkner L."/>
            <person name="Francis F."/>
            <person name="Frankland J."/>
            <person name="Fraser A.E."/>
            <person name="Galgoczy P."/>
            <person name="Gilbert J."/>
            <person name="Gill R."/>
            <person name="Gloeckner G."/>
            <person name="Gregory S.G."/>
            <person name="Gribble S."/>
            <person name="Griffiths C."/>
            <person name="Grocock R."/>
            <person name="Gu Y."/>
            <person name="Gwilliam R."/>
            <person name="Hamilton C."/>
            <person name="Hart E.A."/>
            <person name="Hawes A."/>
            <person name="Heath P.D."/>
            <person name="Heitmann K."/>
            <person name="Hennig S."/>
            <person name="Hernandez J."/>
            <person name="Hinzmann B."/>
            <person name="Ho S."/>
            <person name="Hoffs M."/>
            <person name="Howden P.J."/>
            <person name="Huckle E.J."/>
            <person name="Hume J."/>
            <person name="Hunt P.J."/>
            <person name="Hunt A.R."/>
            <person name="Isherwood J."/>
            <person name="Jacob L."/>
            <person name="Johnson D."/>
            <person name="Jones S."/>
            <person name="de Jong P.J."/>
            <person name="Joseph S.S."/>
            <person name="Keenan S."/>
            <person name="Kelly S."/>
            <person name="Kershaw J.K."/>
            <person name="Khan Z."/>
            <person name="Kioschis P."/>
            <person name="Klages S."/>
            <person name="Knights A.J."/>
            <person name="Kosiura A."/>
            <person name="Kovar-Smith C."/>
            <person name="Laird G.K."/>
            <person name="Langford C."/>
            <person name="Lawlor S."/>
            <person name="Leversha M."/>
            <person name="Lewis L."/>
            <person name="Liu W."/>
            <person name="Lloyd C."/>
            <person name="Lloyd D.M."/>
            <person name="Loulseged H."/>
            <person name="Loveland J.E."/>
            <person name="Lovell J.D."/>
            <person name="Lozado R."/>
            <person name="Lu J."/>
            <person name="Lyne R."/>
            <person name="Ma J."/>
            <person name="Maheshwari M."/>
            <person name="Matthews L.H."/>
            <person name="McDowall J."/>
            <person name="McLaren S."/>
            <person name="McMurray A."/>
            <person name="Meidl P."/>
            <person name="Meitinger T."/>
            <person name="Milne S."/>
            <person name="Miner G."/>
            <person name="Mistry S.L."/>
            <person name="Morgan M."/>
            <person name="Morris S."/>
            <person name="Mueller I."/>
            <person name="Mullikin J.C."/>
            <person name="Nguyen N."/>
            <person name="Nordsiek G."/>
            <person name="Nyakatura G."/>
            <person name="O'dell C.N."/>
            <person name="Okwuonu G."/>
            <person name="Palmer S."/>
            <person name="Pandian R."/>
            <person name="Parker D."/>
            <person name="Parrish J."/>
            <person name="Pasternak S."/>
            <person name="Patel D."/>
            <person name="Pearce A.V."/>
            <person name="Pearson D.M."/>
            <person name="Pelan S.E."/>
            <person name="Perez L."/>
            <person name="Porter K.M."/>
            <person name="Ramsey Y."/>
            <person name="Reichwald K."/>
            <person name="Rhodes S."/>
            <person name="Ridler K.A."/>
            <person name="Schlessinger D."/>
            <person name="Schueler M.G."/>
            <person name="Sehra H.K."/>
            <person name="Shaw-Smith C."/>
            <person name="Shen H."/>
            <person name="Sheridan E.M."/>
            <person name="Shownkeen R."/>
            <person name="Skuce C.D."/>
            <person name="Smith M.L."/>
            <person name="Sotheran E.C."/>
            <person name="Steingruber H.E."/>
            <person name="Steward C.A."/>
            <person name="Storey R."/>
            <person name="Swann R.M."/>
            <person name="Swarbreck D."/>
            <person name="Tabor P.E."/>
            <person name="Taudien S."/>
            <person name="Taylor T."/>
            <person name="Teague B."/>
            <person name="Thomas K."/>
            <person name="Thorpe A."/>
            <person name="Timms K."/>
            <person name="Tracey A."/>
            <person name="Trevanion S."/>
            <person name="Tromans A.C."/>
            <person name="d'Urso M."/>
            <person name="Verduzco D."/>
            <person name="Villasana D."/>
            <person name="Waldron L."/>
            <person name="Wall M."/>
            <person name="Wang Q."/>
            <person name="Warren J."/>
            <person name="Warry G.L."/>
            <person name="Wei X."/>
            <person name="West A."/>
            <person name="Whitehead S.L."/>
            <person name="Whiteley M.N."/>
            <person name="Wilkinson J.E."/>
            <person name="Willey D.L."/>
            <person name="Williams G."/>
            <person name="Williams L."/>
            <person name="Williamson A."/>
            <person name="Williamson H."/>
            <person name="Wilming L."/>
            <person name="Woodmansey R.L."/>
            <person name="Wray P.W."/>
            <person name="Yen J."/>
            <person name="Zhang J."/>
            <person name="Zhou J."/>
            <person name="Zoghbi H."/>
            <person name="Zorilla S."/>
            <person name="Buck D."/>
            <person name="Reinhardt R."/>
            <person name="Poustka A."/>
            <person name="Rosenthal A."/>
            <person name="Lehrach H."/>
            <person name="Meindl A."/>
            <person name="Minx P.J."/>
            <person name="Hillier L.W."/>
            <person name="Willard H.F."/>
            <person name="Wilson R.K."/>
            <person name="Waterston R.H."/>
            <person name="Rice C.M."/>
            <person name="Vaudin M."/>
            <person name="Coulson A."/>
            <person name="Nelson D.L."/>
            <person name="Weinstock G."/>
            <person name="Sulston J.E."/>
            <person name="Durbin R.M."/>
            <person name="Hubbard T."/>
            <person name="Gibbs R.A."/>
            <person name="Beck S."/>
            <person name="Rogers J."/>
            <person name="Bentley D.R."/>
        </authorList>
    </citation>
    <scope>NUCLEOTIDE SEQUENCE [LARGE SCALE GENOMIC DNA]</scope>
</reference>
<reference key="4">
    <citation type="submission" date="2005-09" db="EMBL/GenBank/DDBJ databases">
        <authorList>
            <person name="Mural R.J."/>
            <person name="Istrail S."/>
            <person name="Sutton G.G."/>
            <person name="Florea L."/>
            <person name="Halpern A.L."/>
            <person name="Mobarry C.M."/>
            <person name="Lippert R."/>
            <person name="Walenz B."/>
            <person name="Shatkay H."/>
            <person name="Dew I."/>
            <person name="Miller J.R."/>
            <person name="Flanigan M.J."/>
            <person name="Edwards N.J."/>
            <person name="Bolanos R."/>
            <person name="Fasulo D."/>
            <person name="Halldorsson B.V."/>
            <person name="Hannenhalli S."/>
            <person name="Turner R."/>
            <person name="Yooseph S."/>
            <person name="Lu F."/>
            <person name="Nusskern D.R."/>
            <person name="Shue B.C."/>
            <person name="Zheng X.H."/>
            <person name="Zhong F."/>
            <person name="Delcher A.L."/>
            <person name="Huson D.H."/>
            <person name="Kravitz S.A."/>
            <person name="Mouchard L."/>
            <person name="Reinert K."/>
            <person name="Remington K.A."/>
            <person name="Clark A.G."/>
            <person name="Waterman M.S."/>
            <person name="Eichler E.E."/>
            <person name="Adams M.D."/>
            <person name="Hunkapiller M.W."/>
            <person name="Myers E.W."/>
            <person name="Venter J.C."/>
        </authorList>
    </citation>
    <scope>NUCLEOTIDE SEQUENCE [LARGE SCALE GENOMIC DNA]</scope>
</reference>
<reference key="5">
    <citation type="journal article" date="2004" name="Genome Res.">
        <title>The status, quality, and expansion of the NIH full-length cDNA project: the Mammalian Gene Collection (MGC).</title>
        <authorList>
            <consortium name="The MGC Project Team"/>
        </authorList>
    </citation>
    <scope>NUCLEOTIDE SEQUENCE [LARGE SCALE MRNA] (ISOFORM 1)</scope>
    <source>
        <tissue>Ovary</tissue>
    </source>
</reference>
<reference key="6">
    <citation type="journal article" date="2001" name="DNA Seq.">
        <title>The human membrane progesterone receptor gene: genomic structure and promoter analysis.</title>
        <authorList>
            <person name="Bernauer S."/>
            <person name="Wehling M."/>
            <person name="Gerdes D."/>
            <person name="Falkenstein E."/>
        </authorList>
    </citation>
    <scope>NUCLEOTIDE SEQUENCE [GENOMIC DNA] OF 1-109 (ISOFORM 1)</scope>
</reference>
<reference key="7">
    <citation type="submission" date="2009-03" db="UniProtKB">
        <authorList>
            <person name="Bienvenut W.V."/>
            <person name="Waridel P."/>
            <person name="Quadroni M."/>
        </authorList>
    </citation>
    <scope>PROTEIN SEQUENCE OF 48-67; 81-88; 105-119; 124-132 AND 173-192</scope>
    <scope>PHOSPHORYLATION AT SER-181</scope>
    <scope>IDENTIFICATION BY MASS SPECTROMETRY</scope>
    <source>
        <tissue>Embryonic kidney</tissue>
    </source>
</reference>
<reference key="8">
    <citation type="journal article" date="2006" name="Cell">
        <title>Global, in vivo, and site-specific phosphorylation dynamics in signaling networks.</title>
        <authorList>
            <person name="Olsen J.V."/>
            <person name="Blagoev B."/>
            <person name="Gnad F."/>
            <person name="Macek B."/>
            <person name="Kumar C."/>
            <person name="Mortensen P."/>
            <person name="Mann M."/>
        </authorList>
    </citation>
    <scope>PHOSPHORYLATION [LARGE SCALE ANALYSIS] AT SER-57</scope>
    <scope>IDENTIFICATION BY MASS SPECTROMETRY [LARGE SCALE ANALYSIS]</scope>
    <source>
        <tissue>Cervix carcinoma</tissue>
    </source>
</reference>
<reference key="9">
    <citation type="journal article" date="2007" name="Electrophoresis">
        <title>Toward a global characterization of the phosphoproteome in prostate cancer cells: identification of phosphoproteins in the LNCaP cell line.</title>
        <authorList>
            <person name="Giorgianni F."/>
            <person name="Zhao Y."/>
            <person name="Desiderio D.M."/>
            <person name="Beranova-Giorgianni S."/>
        </authorList>
    </citation>
    <scope>IDENTIFICATION BY MASS SPECTROMETRY [LARGE SCALE ANALYSIS]</scope>
    <source>
        <tissue>Prostate cancer</tissue>
    </source>
</reference>
<reference key="10">
    <citation type="journal article" date="2007" name="J. Proteome Res.">
        <title>Improved titanium dioxide enrichment of phosphopeptides from HeLa cells and high confident phosphopeptide identification by cross-validation of MS/MS and MS/MS/MS spectra.</title>
        <authorList>
            <person name="Yu L.R."/>
            <person name="Zhu Z."/>
            <person name="Chan K.C."/>
            <person name="Issaq H.J."/>
            <person name="Dimitrov D.S."/>
            <person name="Veenstra T.D."/>
        </authorList>
    </citation>
    <scope>IDENTIFICATION BY MASS SPECTROMETRY [LARGE SCALE ANALYSIS]</scope>
    <source>
        <tissue>Cervix carcinoma</tissue>
    </source>
</reference>
<reference key="11">
    <citation type="journal article" date="2008" name="J. Proteome Res.">
        <title>Phosphorylation analysis of primary human T lymphocytes using sequential IMAC and titanium oxide enrichment.</title>
        <authorList>
            <person name="Carrascal M."/>
            <person name="Ovelleiro D."/>
            <person name="Casas V."/>
            <person name="Gay M."/>
            <person name="Abian J."/>
        </authorList>
    </citation>
    <scope>PHOSPHORYLATION [LARGE SCALE ANALYSIS] AT SER-57</scope>
    <scope>IDENTIFICATION BY MASS SPECTROMETRY [LARGE SCALE ANALYSIS]</scope>
    <source>
        <tissue>T-cell</tissue>
    </source>
</reference>
<reference key="12">
    <citation type="journal article" date="2008" name="J. Proteome Res.">
        <title>Phosphoproteome of resting human platelets.</title>
        <authorList>
            <person name="Zahedi R.P."/>
            <person name="Lewandrowski U."/>
            <person name="Wiesner J."/>
            <person name="Wortelkamp S."/>
            <person name="Moebius J."/>
            <person name="Schuetz C."/>
            <person name="Walter U."/>
            <person name="Gambaryan S."/>
            <person name="Sickmann A."/>
        </authorList>
    </citation>
    <scope>IDENTIFICATION BY MASS SPECTROMETRY [LARGE SCALE ANALYSIS]</scope>
    <source>
        <tissue>Platelet</tissue>
    </source>
</reference>
<reference key="13">
    <citation type="journal article" date="2008" name="Mol. Cell">
        <title>Kinase-selective enrichment enables quantitative phosphoproteomics of the kinome across the cell cycle.</title>
        <authorList>
            <person name="Daub H."/>
            <person name="Olsen J.V."/>
            <person name="Bairlein M."/>
            <person name="Gnad F."/>
            <person name="Oppermann F.S."/>
            <person name="Korner R."/>
            <person name="Greff Z."/>
            <person name="Keri G."/>
            <person name="Stemmann O."/>
            <person name="Mann M."/>
        </authorList>
    </citation>
    <scope>PHOSPHORYLATION [LARGE SCALE ANALYSIS] AT SER-54 AND SER-57</scope>
    <scope>IDENTIFICATION BY MASS SPECTROMETRY [LARGE SCALE ANALYSIS]</scope>
    <source>
        <tissue>Cervix carcinoma</tissue>
    </source>
</reference>
<reference key="14">
    <citation type="journal article" date="2008" name="Proc. Natl. Acad. Sci. U.S.A.">
        <title>A quantitative atlas of mitotic phosphorylation.</title>
        <authorList>
            <person name="Dephoure N."/>
            <person name="Zhou C."/>
            <person name="Villen J."/>
            <person name="Beausoleil S.A."/>
            <person name="Bakalarski C.E."/>
            <person name="Elledge S.J."/>
            <person name="Gygi S.P."/>
        </authorList>
    </citation>
    <scope>PHOSPHORYLATION [LARGE SCALE ANALYSIS] AT SER-57 AND SER-181</scope>
    <scope>IDENTIFICATION BY MASS SPECTROMETRY [LARGE SCALE ANALYSIS]</scope>
    <source>
        <tissue>Cervix carcinoma</tissue>
    </source>
</reference>
<reference key="15">
    <citation type="journal article" date="2008" name="Proteomics">
        <title>Large-scale phosphoproteome analysis of human liver tissue by enrichment and fractionation of phosphopeptides with strong anion exchange chromatography.</title>
        <authorList>
            <person name="Han G."/>
            <person name="Ye M."/>
            <person name="Zhou H."/>
            <person name="Jiang X."/>
            <person name="Feng S."/>
            <person name="Jiang X."/>
            <person name="Tian R."/>
            <person name="Wan D."/>
            <person name="Zou H."/>
            <person name="Gu J."/>
        </authorList>
    </citation>
    <scope>PHOSPHORYLATION [LARGE SCALE ANALYSIS] AT SER-57</scope>
    <scope>IDENTIFICATION BY MASS SPECTROMETRY [LARGE SCALE ANALYSIS]</scope>
    <source>
        <tissue>Liver</tissue>
    </source>
</reference>
<reference key="16">
    <citation type="journal article" date="2009" name="Anal. Chem.">
        <title>Lys-N and trypsin cover complementary parts of the phosphoproteome in a refined SCX-based approach.</title>
        <authorList>
            <person name="Gauci S."/>
            <person name="Helbig A.O."/>
            <person name="Slijper M."/>
            <person name="Krijgsveld J."/>
            <person name="Heck A.J."/>
            <person name="Mohammed S."/>
        </authorList>
    </citation>
    <scope>IDENTIFICATION BY MASS SPECTROMETRY [LARGE SCALE ANALYSIS]</scope>
</reference>
<reference key="17">
    <citation type="journal article" date="2009" name="Mol. Cell. Proteomics">
        <title>Large-scale proteomics analysis of the human kinome.</title>
        <authorList>
            <person name="Oppermann F.S."/>
            <person name="Gnad F."/>
            <person name="Olsen J.V."/>
            <person name="Hornberger R."/>
            <person name="Greff Z."/>
            <person name="Keri G."/>
            <person name="Mann M."/>
            <person name="Daub H."/>
        </authorList>
    </citation>
    <scope>PHOSPHORYLATION [LARGE SCALE ANALYSIS] AT SER-57</scope>
    <scope>IDENTIFICATION BY MASS SPECTROMETRY [LARGE SCALE ANALYSIS]</scope>
</reference>
<reference key="18">
    <citation type="journal article" date="2009" name="Sci. Signal.">
        <title>Quantitative phosphoproteomic analysis of T cell receptor signaling reveals system-wide modulation of protein-protein interactions.</title>
        <authorList>
            <person name="Mayya V."/>
            <person name="Lundgren D.H."/>
            <person name="Hwang S.-I."/>
            <person name="Rezaul K."/>
            <person name="Wu L."/>
            <person name="Eng J.K."/>
            <person name="Rodionov V."/>
            <person name="Han D.K."/>
        </authorList>
    </citation>
    <scope>PHOSPHORYLATION [LARGE SCALE ANALYSIS] AT SER-57</scope>
    <scope>IDENTIFICATION BY MASS SPECTROMETRY [LARGE SCALE ANALYSIS]</scope>
    <source>
        <tissue>Leukemic T-cell</tissue>
    </source>
</reference>
<reference key="19">
    <citation type="journal article" date="2010" name="Sci. Signal.">
        <title>Quantitative phosphoproteomics reveals widespread full phosphorylation site occupancy during mitosis.</title>
        <authorList>
            <person name="Olsen J.V."/>
            <person name="Vermeulen M."/>
            <person name="Santamaria A."/>
            <person name="Kumar C."/>
            <person name="Miller M.L."/>
            <person name="Jensen L.J."/>
            <person name="Gnad F."/>
            <person name="Cox J."/>
            <person name="Jensen T.S."/>
            <person name="Nigg E.A."/>
            <person name="Brunak S."/>
            <person name="Mann M."/>
        </authorList>
    </citation>
    <scope>PHOSPHORYLATION [LARGE SCALE ANALYSIS] AT SER-57 AND SER-181</scope>
    <scope>IDENTIFICATION BY MASS SPECTROMETRY [LARGE SCALE ANALYSIS]</scope>
    <source>
        <tissue>Cervix carcinoma</tissue>
    </source>
</reference>
<reference key="20">
    <citation type="journal article" date="2011" name="BMC Syst. Biol.">
        <title>Initial characterization of the human central proteome.</title>
        <authorList>
            <person name="Burkard T.R."/>
            <person name="Planyavsky M."/>
            <person name="Kaupe I."/>
            <person name="Breitwieser F.P."/>
            <person name="Buerckstuemmer T."/>
            <person name="Bennett K.L."/>
            <person name="Superti-Furga G."/>
            <person name="Colinge J."/>
        </authorList>
    </citation>
    <scope>IDENTIFICATION BY MASS SPECTROMETRY [LARGE SCALE ANALYSIS]</scope>
</reference>
<reference key="21">
    <citation type="journal article" date="2011" name="Nat. Commun.">
        <title>Identification of the PGRMC1 protein complex as the putative sigma-2 receptor binding site.</title>
        <authorList>
            <person name="Xu J."/>
            <person name="Zeng C."/>
            <person name="Chu W."/>
            <person name="Pan F."/>
            <person name="Rothfuss J.M."/>
            <person name="Zhang F."/>
            <person name="Tu Z."/>
            <person name="Zhou D."/>
            <person name="Zeng D."/>
            <person name="Vangveravong S."/>
            <person name="Johnston F."/>
            <person name="Spitzer D."/>
            <person name="Chang K.C."/>
            <person name="Hotchkiss R.S."/>
            <person name="Hawkins W.G."/>
            <person name="Wheeler K.T."/>
            <person name="Mach R.H."/>
        </authorList>
    </citation>
    <scope>CAUTION</scope>
</reference>
<reference key="22">
    <citation type="journal article" date="2011" name="Sci. Signal.">
        <title>System-wide temporal characterization of the proteome and phosphoproteome of human embryonic stem cell differentiation.</title>
        <authorList>
            <person name="Rigbolt K.T."/>
            <person name="Prokhorova T.A."/>
            <person name="Akimov V."/>
            <person name="Henningsen J."/>
            <person name="Johansen P.T."/>
            <person name="Kratchmarova I."/>
            <person name="Kassem M."/>
            <person name="Mann M."/>
            <person name="Olsen J.V."/>
            <person name="Blagoev B."/>
        </authorList>
    </citation>
    <scope>PHOSPHORYLATION [LARGE SCALE ANALYSIS] AT SER-57 AND SER-181</scope>
    <scope>IDENTIFICATION BY MASS SPECTROMETRY [LARGE SCALE ANALYSIS]</scope>
</reference>
<reference key="23">
    <citation type="journal article" date="2012" name="Expert Opin. Drug Metab. Toxicol.">
        <title>S2R(Pgrmc1): the cytochrome-related sigma-2 receptor that regulates lipid and drug metabolism and hormone signaling.</title>
        <authorList>
            <person name="Ahmed I.S."/>
            <person name="Chamberlain C."/>
            <person name="Craven R.J."/>
        </authorList>
    </citation>
    <scope>CAUTION</scope>
</reference>
<reference key="24">
    <citation type="journal article" date="2013" name="J. Neuroendocrinol.">
        <title>Nonclassical progesterone signalling molecules in the nervous system.</title>
        <authorList>
            <person name="Petersen S.L."/>
            <person name="Intlekofer K.A."/>
            <person name="Moura-Conlon P.J."/>
            <person name="Brewer D.N."/>
            <person name="Del Pino Sans J."/>
            <person name="Lopez J.A."/>
        </authorList>
    </citation>
    <scope>MISCELLANEOUS</scope>
    <scope>REVIEW</scope>
    <scope>SUBUNIT</scope>
</reference>
<reference key="25">
    <citation type="journal article" date="2013" name="J. Proteome Res.">
        <title>Toward a comprehensive characterization of a human cancer cell phosphoproteome.</title>
        <authorList>
            <person name="Zhou H."/>
            <person name="Di Palma S."/>
            <person name="Preisinger C."/>
            <person name="Peng M."/>
            <person name="Polat A.N."/>
            <person name="Heck A.J."/>
            <person name="Mohammed S."/>
        </authorList>
    </citation>
    <scope>PHOSPHORYLATION [LARGE SCALE ANALYSIS] AT SER-57 AND SER-181</scope>
    <scope>IDENTIFICATION BY MASS SPECTROMETRY [LARGE SCALE ANALYSIS]</scope>
    <source>
        <tissue>Cervix carcinoma</tissue>
        <tissue>Erythroleukemia</tissue>
    </source>
</reference>
<reference key="26">
    <citation type="journal article" date="2014" name="J. Proteomics">
        <title>An enzyme assisted RP-RPLC approach for in-depth analysis of human liver phosphoproteome.</title>
        <authorList>
            <person name="Bian Y."/>
            <person name="Song C."/>
            <person name="Cheng K."/>
            <person name="Dong M."/>
            <person name="Wang F."/>
            <person name="Huang J."/>
            <person name="Sun D."/>
            <person name="Wang L."/>
            <person name="Ye M."/>
            <person name="Zou H."/>
        </authorList>
    </citation>
    <scope>PHOSPHORYLATION [LARGE SCALE ANALYSIS] AT SER-54; SER-57; THR-74 AND SER-181</scope>
    <scope>IDENTIFICATION BY MASS SPECTROMETRY [LARGE SCALE ANALYSIS]</scope>
    <source>
        <tissue>Liver</tissue>
    </source>
</reference>
<reference key="27">
    <citation type="journal article" date="2014" name="Reprod. Sci.">
        <title>Expression patterns of progesterone receptor membrane components 1 and 2 in endometria from women with and without endometriosis.</title>
        <authorList>
            <person name="Bunch K."/>
            <person name="Tinnemore D."/>
            <person name="Huff S."/>
            <person name="Hoffer Z.S."/>
            <person name="Burney R.O."/>
            <person name="Stallings J.D."/>
        </authorList>
    </citation>
    <scope>TISSUE SPECIFICITY</scope>
</reference>
<reference key="28">
    <citation type="journal article" date="2015" name="Biochemistry">
        <title>Spectroscopic and mutagenesis studies of human PGRMC1.</title>
        <authorList>
            <person name="Kaluka D."/>
            <person name="Batabyal D."/>
            <person name="Chiang B.Y."/>
            <person name="Poulos T.L."/>
            <person name="Yeh S.R."/>
        </authorList>
    </citation>
    <scope>FUNCTION</scope>
</reference>
<reference key="29">
    <citation type="journal article" date="2015" name="Proteomics">
        <title>N-terminome analysis of the human mitochondrial proteome.</title>
        <authorList>
            <person name="Vaca Jacome A.S."/>
            <person name="Rabilloud T."/>
            <person name="Schaeffer-Reiss C."/>
            <person name="Rompais M."/>
            <person name="Ayoub D."/>
            <person name="Lane L."/>
            <person name="Bairoch A."/>
            <person name="Van Dorsselaer A."/>
            <person name="Carapito C."/>
        </authorList>
    </citation>
    <scope>IDENTIFICATION BY MASS SPECTROMETRY [LARGE SCALE ANALYSIS]</scope>
</reference>
<reference key="30">
    <citation type="journal article" date="2016" name="Biochemistry">
        <title>A Novel Role for Progesterone Receptor Membrane Component 1 (PGRMC1): A Partner and Regulator of Ferrochelatase.</title>
        <authorList>
            <person name="Piel R.B. III"/>
            <person name="Shiferaw M.T."/>
            <person name="Vashisht A.A."/>
            <person name="Marcero J.R."/>
            <person name="Praissman J.L."/>
            <person name="Phillips J.D."/>
            <person name="Wohlschlegel J.A."/>
            <person name="Medlock A.E."/>
        </authorList>
    </citation>
    <scope>FUNCTION</scope>
    <scope>INTERACTION WITH FECH</scope>
    <scope>HEME-BINDING</scope>
</reference>
<reference key="31">
    <citation type="journal article" date="2017" name="Front. Pharmacol.">
        <title>Membrane associated progesterone receptors: promiscuous proteins with pleiotropic functions - focus on interactions with cytochromes P450.</title>
        <authorList>
            <person name="Ryu C.S."/>
            <person name="Klein K."/>
            <person name="Zanger U.M."/>
        </authorList>
    </citation>
    <scope>REVIEW</scope>
    <scope>FUNCTION</scope>
    <scope>SUBUNIT</scope>
    <scope>SUBCELLULAR LOCATION</scope>
    <scope>MISCELLANEOUS</scope>
</reference>
<reference key="32">
    <citation type="journal article" date="2017" name="Proc. Natl. Acad. Sci. U.S.A.">
        <title>Identification of the gene that codes for the sigma2 receptor.</title>
        <authorList>
            <person name="Alon A."/>
            <person name="Schmidt H.R."/>
            <person name="Wood M.D."/>
            <person name="Sahn J.J."/>
            <person name="Martin S.F."/>
            <person name="Kruse A.C."/>
        </authorList>
    </citation>
    <scope>CAUTION</scope>
</reference>
<reference key="33">
    <citation type="journal article" date="2017" name="Pharmacol. Res.">
        <title>Sigma-2 receptor and progesterone receptor membrane component 1 (PGRMC1) are two different proteins: Proofs by fluorescent labeling and binding of sigma-2 receptor ligands to PGRMC1.</title>
        <authorList>
            <person name="Pati M.L."/>
            <person name="Groza D."/>
            <person name="Riganti C."/>
            <person name="Kopecka J."/>
            <person name="Niso M."/>
            <person name="Berardi F."/>
            <person name="Hager S."/>
            <person name="Heffeter P."/>
            <person name="Hirai M."/>
            <person name="Tsugawa H."/>
            <person name="Kabe Y."/>
            <person name="Suematsu M."/>
            <person name="Abate C."/>
        </authorList>
    </citation>
    <scope>CAUTION</scope>
</reference>
<reference key="34">
    <citation type="journal article" date="2018" name="Sci. Rep.">
        <title>Sigma-2 Receptor/TMEM97 and PGRMC-1 Increase the Rate of Internalization of LDL by LDL Receptor through the Formation of a Ternary Complex.</title>
        <authorList>
            <person name="Riad A."/>
            <person name="Zeng C."/>
            <person name="Weng C.C."/>
            <person name="Winters H."/>
            <person name="Xu K."/>
            <person name="Makvandi M."/>
            <person name="Metz T."/>
            <person name="Carlin S."/>
            <person name="Mach R.H."/>
        </authorList>
    </citation>
    <scope>FUNCTION</scope>
    <scope>SUBCELLULAR LOCATION</scope>
    <scope>INTERACTION WITH TMEM97 AND LDLR</scope>
</reference>
<reference key="35">
    <citation type="journal article" date="2022" name="J. Proteins Proteom.">
        <title>Mass spectrometric analysis of chondroitin sulfate-linked peptides.</title>
        <authorList>
            <person name="Ramarajan M.G."/>
            <person name="Saraswat M."/>
            <person name="Budhraja R."/>
            <person name="Garapati K."/>
            <person name="Raymond K."/>
            <person name="Pandey A."/>
        </authorList>
    </citation>
    <scope>SUBCELLULAR LOCATION</scope>
    <scope>TISSUE SPECIFICITY</scope>
    <scope>GLYCOSYLATION</scope>
</reference>
<reference key="36">
    <citation type="journal article" date="2023" name="Int. J. Mol. Sci.">
        <title>Sigma-2 Receptor Ligand Binding Modulates Association between TSPO and TMEM97.</title>
        <authorList>
            <person name="Thejer B.M."/>
            <person name="Infantino V."/>
            <person name="Santarsiero A."/>
            <person name="Pappalardo I."/>
            <person name="Abatematteo F.S."/>
            <person name="Teakel S."/>
            <person name="Van Oosterum A."/>
            <person name="Mach R.H."/>
            <person name="Denora N."/>
            <person name="Lee B.C."/>
            <person name="Resta N."/>
            <person name="Bagnulo R."/>
            <person name="Niso M."/>
            <person name="Contino M."/>
            <person name="Montsch B."/>
            <person name="Heffeter P."/>
            <person name="Abate C."/>
            <person name="Cahill M.A."/>
        </authorList>
    </citation>
    <scope>INTERACTION WITH TMEM97 AND TSPO</scope>
</reference>
<reference key="37">
    <citation type="journal article" date="2023" name="Mol. Cell. Proteomics">
        <title>Mapping the Human Chondroitin Sulfate Glycoproteome Reveals an Unexpected Correlation Between Glycan Sulfation and Attachment Site Characteristics.</title>
        <authorList>
            <person name="Noborn F."/>
            <person name="Nilsson J."/>
            <person name="Sihlbom C."/>
            <person name="Nikpour M."/>
            <person name="Kjellen L."/>
            <person name="Larson G."/>
        </authorList>
    </citation>
    <scope>SUBCELLULAR LOCATION</scope>
    <scope>TISSUE SPECIFICITY</scope>
    <scope>GLYCOSYLATION</scope>
</reference>
<reference evidence="26" key="38">
    <citation type="journal article" date="2016" name="Nat. Commun.">
        <title>Haem-dependent dimerization of PGRMC1/Sigma-2 receptor facilitates cancer proliferation and chemoresistance.</title>
        <authorList>
            <person name="Kabe Y."/>
            <person name="Nakane T."/>
            <person name="Koike I."/>
            <person name="Yamamoto T."/>
            <person name="Sugiura Y."/>
            <person name="Harada E."/>
            <person name="Sugase K."/>
            <person name="Shimamura T."/>
            <person name="Ohmura M."/>
            <person name="Muraoka K."/>
            <person name="Yamamoto A."/>
            <person name="Uchida T."/>
            <person name="Iwata S."/>
            <person name="Yamaguchi Y."/>
            <person name="Krayukhina E."/>
            <person name="Noda M."/>
            <person name="Handa H."/>
            <person name="Ishimori K."/>
            <person name="Uchiyama S."/>
            <person name="Kobayashi T."/>
            <person name="Suematsu M."/>
        </authorList>
    </citation>
    <scope>X-RAY CRYSTALLOGRAPHY (1.95 ANGSTROMS) OF 72-195 IN COMPLEX WITH HEME</scope>
    <scope>INTERACTION WITH CYP1A1; CYP3A4 AND EGFR</scope>
    <scope>SUBUNIT</scope>
    <scope>HEME-BINDING</scope>
    <scope>FUNCTION</scope>
    <scope>MUTAGENESIS OF TYR-113</scope>
</reference>
<feature type="chain" id="PRO_0000121739" description="Membrane-associated progesterone receptor component 1">
    <location>
        <begin position="1"/>
        <end position="195"/>
    </location>
</feature>
<feature type="topological domain" description="Lumenal" evidence="4">
    <location>
        <begin position="1"/>
        <end position="24"/>
    </location>
</feature>
<feature type="transmembrane region" description="Helical" evidence="4">
    <location>
        <begin position="25"/>
        <end position="43"/>
    </location>
</feature>
<feature type="topological domain" description="Cytoplasmic" evidence="4">
    <location>
        <begin position="44"/>
        <end position="195"/>
    </location>
</feature>
<feature type="domain" description="Cytochrome b5 heme-binding">
    <location>
        <begin position="72"/>
        <end position="171"/>
    </location>
</feature>
<feature type="region of interest" description="Disordered" evidence="5">
    <location>
        <begin position="51"/>
        <end position="71"/>
    </location>
</feature>
<feature type="region of interest" description="Disordered" evidence="5">
    <location>
        <begin position="173"/>
        <end position="195"/>
    </location>
</feature>
<feature type="binding site" description="axial binding residue" evidence="10 26">
    <location>
        <position position="113"/>
    </location>
    <ligand>
        <name>heme</name>
        <dbReference type="ChEBI" id="CHEBI:30413"/>
    </ligand>
    <ligandPart>
        <name>Fe</name>
        <dbReference type="ChEBI" id="CHEBI:18248"/>
    </ligandPart>
</feature>
<feature type="modified residue" description="Phosphoserine" evidence="30 37">
    <location>
        <position position="54"/>
    </location>
</feature>
<feature type="modified residue" description="Phosphoserine" evidence="27 28 29 30 31 32 33 34 35 36 37">
    <location>
        <position position="57"/>
    </location>
</feature>
<feature type="modified residue" description="Phosphothreonine" evidence="37">
    <location>
        <position position="74"/>
    </location>
</feature>
<feature type="modified residue" description="Phosphoserine" evidence="19 29 34 35 36 37">
    <location>
        <position position="181"/>
    </location>
</feature>
<feature type="splice variant" id="VSP_054710" description="In isoform 2." evidence="20">
    <original>EGPYGVFAGRDASRGLATFCLDKEALKDEYDDLSDLTAAQQETLSDWESQFTF</original>
    <variation>V</variation>
    <location>
        <begin position="110"/>
        <end position="162"/>
    </location>
</feature>
<feature type="mutagenesis site" description="Abolishes interaction with CYP1A1 and CYP3A4." evidence="10">
    <original>Y</original>
    <variation>F</variation>
    <location>
        <position position="113"/>
    </location>
</feature>
<feature type="helix" evidence="38">
    <location>
        <begin position="75"/>
        <end position="78"/>
    </location>
</feature>
<feature type="strand" evidence="38">
    <location>
        <begin position="82"/>
        <end position="87"/>
    </location>
</feature>
<feature type="strand" evidence="38">
    <location>
        <begin position="89"/>
        <end position="93"/>
    </location>
</feature>
<feature type="strand" evidence="38">
    <location>
        <begin position="96"/>
        <end position="99"/>
    </location>
</feature>
<feature type="helix" evidence="38">
    <location>
        <begin position="101"/>
        <end position="103"/>
    </location>
</feature>
<feature type="helix" evidence="38">
    <location>
        <begin position="104"/>
        <end position="107"/>
    </location>
</feature>
<feature type="helix" evidence="38">
    <location>
        <begin position="114"/>
        <end position="116"/>
    </location>
</feature>
<feature type="helix" evidence="38">
    <location>
        <begin position="122"/>
        <end position="127"/>
    </location>
</feature>
<feature type="helix" evidence="38">
    <location>
        <begin position="132"/>
        <end position="134"/>
    </location>
</feature>
<feature type="helix" evidence="38">
    <location>
        <begin position="142"/>
        <end position="144"/>
    </location>
</feature>
<feature type="helix" evidence="38">
    <location>
        <begin position="147"/>
        <end position="163"/>
    </location>
</feature>
<feature type="strand" evidence="38">
    <location>
        <begin position="164"/>
        <end position="170"/>
    </location>
</feature>
<comment type="function">
    <text evidence="2 9 11 15 22">Component of a progesterone-binding protein complex (PubMed:28396637). Binds progesterone (PubMed:25675345). Has many reported cellular functions (heme homeostasis, interaction with CYPs). Required for the maintenance of uterine histoarchitecture and normal female reproductive lifespan (By similarity). Intracellular heme chaperone. Regulates heme synthesis via interactions with FECH and acts as a heme donor for at least some hemoproteins (PubMed:27599036). Forms a ternary complex with TMEM97 receptor and low density lipid receptor/LDLR, which increases LDLR-mediated LDL lipoprotein internalization (PubMed:30443021).</text>
</comment>
<comment type="subunit">
    <text evidence="10 11 13 15 17 22">Homodimer. Forms stable homodimer through hydrophobic heme-heme stacking interactions (PubMed:26988023, PubMed:28396637). Interacts with FECH; the interaction results in decreased FECH activity (PubMed:27599036). Interacts with EGFR, CYP1A1 and CYP3A4; the interactions require PGRMC1 homodimerization (PubMed:28396637). Interacts with TMEM97 and LDLR; the interaction increases LDL internalization (PubMed:30443021). Forms a complex with TMEM97 and TSPO; the interaction occurs in MIA PaCa-2 cells but not in MCF7 cells (PubMed:37047353).</text>
</comment>
<comment type="interaction">
    <interactant intactId="EBI-1045534">
        <id>O00264</id>
    </interactant>
    <interactant intactId="EBI-700794">
        <id>Q13323</id>
        <label>BIK</label>
    </interactant>
    <organismsDiffer>false</organismsDiffer>
    <experiments>3</experiments>
</comment>
<comment type="interaction">
    <interactant intactId="EBI-1045534">
        <id>O00264</id>
    </interactant>
    <interactant intactId="EBI-1748958">
        <id>P49069</id>
        <label>CAMLG</label>
    </interactant>
    <organismsDiffer>false</organismsDiffer>
    <experiments>3</experiments>
</comment>
<comment type="interaction">
    <interactant intactId="EBI-1045534">
        <id>O00264</id>
    </interactant>
    <interactant intactId="EBI-953766">
        <id>Q9H6E4</id>
        <label>CCDC134</label>
    </interactant>
    <organismsDiffer>false</organismsDiffer>
    <experiments>3</experiments>
</comment>
<comment type="interaction">
    <interactant intactId="EBI-1045534">
        <id>O00264</id>
    </interactant>
    <interactant intactId="EBI-725145">
        <id>O76071</id>
        <label>CIAO1</label>
    </interactant>
    <organismsDiffer>false</organismsDiffer>
    <experiments>5</experiments>
</comment>
<comment type="interaction">
    <interactant intactId="EBI-1045534">
        <id>O00264</id>
    </interactant>
    <interactant intactId="EBI-12843376">
        <id>Q8NES8</id>
        <label>DEFB124</label>
    </interactant>
    <organismsDiffer>false</organismsDiffer>
    <experiments>3</experiments>
</comment>
<comment type="interaction">
    <interactant intactId="EBI-1045534">
        <id>O00264</id>
    </interactant>
    <interactant intactId="EBI-5457558">
        <id>Q15392</id>
        <label>DHCR24</label>
    </interactant>
    <organismsDiffer>false</organismsDiffer>
    <experiments>2</experiments>
</comment>
<comment type="interaction">
    <interactant intactId="EBI-1045534">
        <id>O00264</id>
    </interactant>
    <interactant intactId="EBI-17640610">
        <id>P34910-2</id>
        <label>EVI2B</label>
    </interactant>
    <organismsDiffer>false</organismsDiffer>
    <experiments>3</experiments>
</comment>
<comment type="interaction">
    <interactant intactId="EBI-1045534">
        <id>O00264</id>
    </interactant>
    <interactant intactId="EBI-1390356">
        <id>P22830</id>
        <label>FECH</label>
    </interactant>
    <organismsDiffer>false</organismsDiffer>
    <experiments>4</experiments>
</comment>
<comment type="interaction">
    <interactant intactId="EBI-1045534">
        <id>O00264</id>
    </interactant>
    <interactant intactId="EBI-2515857">
        <id>O43681</id>
        <label>GET3</label>
    </interactant>
    <organismsDiffer>false</organismsDiffer>
    <experiments>3</experiments>
</comment>
<comment type="interaction">
    <interactant intactId="EBI-1045534">
        <id>O00264</id>
    </interactant>
    <interactant intactId="EBI-712073">
        <id>Q8NBJ4</id>
        <label>GOLM1</label>
    </interactant>
    <organismsDiffer>false</organismsDiffer>
    <experiments>3</experiments>
</comment>
<comment type="interaction">
    <interactant intactId="EBI-1045534">
        <id>O00264</id>
    </interactant>
    <interactant intactId="EBI-749265">
        <id>Q8N6L0</id>
        <label>KASH5</label>
    </interactant>
    <organismsDiffer>false</organismsDiffer>
    <experiments>3</experiments>
</comment>
<comment type="interaction">
    <interactant intactId="EBI-1045534">
        <id>O00264</id>
    </interactant>
    <interactant intactId="EBI-11981259">
        <id>Q9UJ90</id>
        <label>KCNE5</label>
    </interactant>
    <organismsDiffer>false</organismsDiffer>
    <experiments>3</experiments>
</comment>
<comment type="interaction">
    <interactant intactId="EBI-1045534">
        <id>O00264</id>
    </interactant>
    <interactant intactId="EBI-1050125">
        <id>O15173</id>
        <label>PGRMC2</label>
    </interactant>
    <organismsDiffer>false</organismsDiffer>
    <experiments>4</experiments>
</comment>
<comment type="interaction">
    <interactant intactId="EBI-1045534">
        <id>O00264</id>
    </interactant>
    <interactant intactId="EBI-726554">
        <id>P16435</id>
        <label>POR</label>
    </interactant>
    <organismsDiffer>false</organismsDiffer>
    <experiments>6</experiments>
</comment>
<comment type="interaction">
    <interactant intactId="EBI-1045534">
        <id>O00264</id>
    </interactant>
    <interactant intactId="EBI-744081">
        <id>Q96EQ0</id>
        <label>SGTB</label>
    </interactant>
    <organismsDiffer>false</organismsDiffer>
    <experiments>3</experiments>
</comment>
<comment type="interaction">
    <interactant intactId="EBI-1045534">
        <id>O00264</id>
    </interactant>
    <interactant intactId="EBI-7138235">
        <id>Q9NQZ8</id>
        <label>ZNF71</label>
    </interactant>
    <organismsDiffer>false</organismsDiffer>
    <experiments>5</experiments>
</comment>
<comment type="interaction">
    <interactant intactId="EBI-1045534">
        <id>O00264</id>
    </interactant>
    <interactant intactId="EBI-4320576">
        <id>P00181</id>
        <label>CYP2C2</label>
    </interactant>
    <organismsDiffer>true</organismsDiffer>
    <experiments>6</experiments>
</comment>
<comment type="subcellular location">
    <subcellularLocation>
        <location evidence="3">Microsome membrane</location>
        <topology evidence="4">Single-pass membrane protein</topology>
    </subcellularLocation>
    <subcellularLocation>
        <location evidence="22">Smooth endoplasmic reticulum membrane</location>
        <topology evidence="4">Single-pass membrane protein</topology>
    </subcellularLocation>
    <subcellularLocation>
        <location evidence="2">Mitochondrion outer membrane</location>
        <topology evidence="24">Single-pass membrane protein</topology>
        <orientation evidence="2">Extracellular side</orientation>
    </subcellularLocation>
    <subcellularLocation>
        <location evidence="16 18">Secreted</location>
    </subcellularLocation>
    <text evidence="15">Localized at cell membrane, probably in lipid rafts, in serum-starved conditions.</text>
</comment>
<comment type="alternative products">
    <event type="alternative splicing"/>
    <isoform>
        <id>O00264-1</id>
        <name>1</name>
        <sequence type="displayed"/>
    </isoform>
    <isoform>
        <id>O00264-2</id>
        <name>2</name>
        <sequence type="described" ref="VSP_054710"/>
    </isoform>
</comment>
<comment type="tissue specificity">
    <text evidence="8 16">Detected in urine (at protein level) (PubMed:36213313, PubMed:37453717). Expressed by endometrial glands and stroma (at protein level) (PubMed:23793472). Widely expressed, with highest expression in liver and kidney.</text>
</comment>
<comment type="domain">
    <text evidence="1">The cytochrome b5 heme-binding domain lacks the conserved iron-binding His residues at positions 107 and 131.</text>
</comment>
<comment type="PTM">
    <text evidence="16 18">O-glycosylated; contains chondroitin sulfate attached to Ser-54. Ser-54 is in the cytoplasmic domain but the glycosylated form was detected in urine, suggesting that the membrane-bound form is cleaved, allowing for production of a secreted form which is glycosylated.</text>
</comment>
<comment type="miscellaneous">
    <text evidence="21 22">Non-classical progesterone receptors involved in extranuclear signaling are classified in 2 groups: the class II progestin and adipoQ receptor (PAQR) family (also called mPRs) (PAQR5, PAQR6, PAQR7, PAQR8 and PAQR9) and the b5-like heme/steroid-binding protein family (also called MAPRs) (PGRMC1, PGRMC2, NENF and CYB5D2).</text>
</comment>
<comment type="similarity">
    <text evidence="24">Belongs to the cytochrome b5 family. MAPR subfamily.</text>
</comment>
<comment type="caution">
    <text evidence="6 7 12 14">Was initially identified as sigma-2 receptor, which is thought to play important role in regulating cell survival, morphology and differentiation (PubMed:21730960, PubMed:22292588, PubMed:28007569). However, it was later shown that it is not the case (PubMed:28007569). The sigma-2 receptor has been identified as TMEM97 (AC Q5BJF2) (PubMed:28559337).</text>
</comment>
<keyword id="KW-0002">3D-structure</keyword>
<keyword id="KW-0025">Alternative splicing</keyword>
<keyword id="KW-0903">Direct protein sequencing</keyword>
<keyword id="KW-0256">Endoplasmic reticulum</keyword>
<keyword id="KW-0325">Glycoprotein</keyword>
<keyword id="KW-0408">Iron</keyword>
<keyword id="KW-0446">Lipid-binding</keyword>
<keyword id="KW-0472">Membrane</keyword>
<keyword id="KW-0479">Metal-binding</keyword>
<keyword id="KW-0492">Microsome</keyword>
<keyword id="KW-0496">Mitochondrion</keyword>
<keyword id="KW-1000">Mitochondrion outer membrane</keyword>
<keyword id="KW-0597">Phosphoprotein</keyword>
<keyword id="KW-0654">Proteoglycan</keyword>
<keyword id="KW-1267">Proteomics identification</keyword>
<keyword id="KW-0675">Receptor</keyword>
<keyword id="KW-1185">Reference proteome</keyword>
<keyword id="KW-0964">Secreted</keyword>
<keyword id="KW-0754">Steroid-binding</keyword>
<keyword id="KW-0812">Transmembrane</keyword>
<keyword id="KW-1133">Transmembrane helix</keyword>
<gene>
    <name evidence="25" type="primary">PGRMC1</name>
    <name evidence="23" type="synonym">HPR6.6</name>
    <name type="synonym">PGRMC</name>
</gene>